<name>ECFA2_MYCGE</name>
<comment type="function">
    <text evidence="1">ATP-binding (A) component of a common energy-coupling factor (ECF) ABC-transporter complex. Unlike classic ABC transporters this ECF transporter provides the energy necessary to transport a number of different substrates.</text>
</comment>
<comment type="subunit">
    <text evidence="1">Forms a stable energy-coupling factor (ECF) transporter complex composed of 2 membrane-embedded substrate-binding proteins (S component), 2 ATP-binding proteins (A component) and 2 transmembrane proteins (T component).</text>
</comment>
<comment type="subcellular location">
    <subcellularLocation>
        <location evidence="1">Cell membrane</location>
        <topology evidence="1">Peripheral membrane protein</topology>
    </subcellularLocation>
</comment>
<comment type="similarity">
    <text evidence="1">Belongs to the ABC transporter superfamily. Energy-coupling factor EcfA family.</text>
</comment>
<gene>
    <name evidence="1" type="primary">ecfA2</name>
    <name type="synonym">cbiO2</name>
    <name type="ordered locus">MG180</name>
</gene>
<dbReference type="EC" id="7.-.-.-" evidence="1"/>
<dbReference type="EMBL" id="L43967">
    <property type="protein sequence ID" value="AAC71399.1"/>
    <property type="molecule type" value="Genomic_DNA"/>
</dbReference>
<dbReference type="EMBL" id="U01754">
    <property type="protein sequence ID" value="AAD10568.1"/>
    <property type="molecule type" value="Genomic_DNA"/>
</dbReference>
<dbReference type="EMBL" id="U01750">
    <property type="protein sequence ID" value="AAD10564.1"/>
    <property type="molecule type" value="Genomic_DNA"/>
</dbReference>
<dbReference type="PIR" id="I64219">
    <property type="entry name" value="I64219"/>
</dbReference>
<dbReference type="RefSeq" id="WP_009885865.1">
    <property type="nucleotide sequence ID" value="NC_000908.2"/>
</dbReference>
<dbReference type="SMR" id="P47426"/>
<dbReference type="FunCoup" id="P47426">
    <property type="interactions" value="124"/>
</dbReference>
<dbReference type="STRING" id="243273.MG_180"/>
<dbReference type="GeneID" id="88282312"/>
<dbReference type="KEGG" id="mge:MG_180"/>
<dbReference type="eggNOG" id="COG1122">
    <property type="taxonomic scope" value="Bacteria"/>
</dbReference>
<dbReference type="HOGENOM" id="CLU_000604_1_22_14"/>
<dbReference type="InParanoid" id="P47426"/>
<dbReference type="OrthoDB" id="9784332at2"/>
<dbReference type="BioCyc" id="MGEN243273:G1GJ2-204-MONOMER"/>
<dbReference type="Proteomes" id="UP000000807">
    <property type="component" value="Chromosome"/>
</dbReference>
<dbReference type="GO" id="GO:0043190">
    <property type="term" value="C:ATP-binding cassette (ABC) transporter complex"/>
    <property type="evidence" value="ECO:0000318"/>
    <property type="project" value="GO_Central"/>
</dbReference>
<dbReference type="GO" id="GO:0005524">
    <property type="term" value="F:ATP binding"/>
    <property type="evidence" value="ECO:0000318"/>
    <property type="project" value="GO_Central"/>
</dbReference>
<dbReference type="GO" id="GO:0016887">
    <property type="term" value="F:ATP hydrolysis activity"/>
    <property type="evidence" value="ECO:0007669"/>
    <property type="project" value="InterPro"/>
</dbReference>
<dbReference type="GO" id="GO:0042626">
    <property type="term" value="F:ATPase-coupled transmembrane transporter activity"/>
    <property type="evidence" value="ECO:0000318"/>
    <property type="project" value="GO_Central"/>
</dbReference>
<dbReference type="CDD" id="cd03225">
    <property type="entry name" value="ABC_cobalt_CbiO_domain1"/>
    <property type="match status" value="1"/>
</dbReference>
<dbReference type="FunFam" id="3.40.50.300:FF:000224">
    <property type="entry name" value="Energy-coupling factor transporter ATP-binding protein EcfA"/>
    <property type="match status" value="1"/>
</dbReference>
<dbReference type="Gene3D" id="3.40.50.300">
    <property type="entry name" value="P-loop containing nucleotide triphosphate hydrolases"/>
    <property type="match status" value="1"/>
</dbReference>
<dbReference type="InterPro" id="IPR003593">
    <property type="entry name" value="AAA+_ATPase"/>
</dbReference>
<dbReference type="InterPro" id="IPR003439">
    <property type="entry name" value="ABC_transporter-like_ATP-bd"/>
</dbReference>
<dbReference type="InterPro" id="IPR017871">
    <property type="entry name" value="ABC_transporter-like_CS"/>
</dbReference>
<dbReference type="InterPro" id="IPR015856">
    <property type="entry name" value="ABC_transpr_CbiO/EcfA_su"/>
</dbReference>
<dbReference type="InterPro" id="IPR050095">
    <property type="entry name" value="ECF_ABC_transporter_ATP-bd"/>
</dbReference>
<dbReference type="InterPro" id="IPR030946">
    <property type="entry name" value="EcfA2"/>
</dbReference>
<dbReference type="InterPro" id="IPR027417">
    <property type="entry name" value="P-loop_NTPase"/>
</dbReference>
<dbReference type="NCBIfam" id="TIGR04521">
    <property type="entry name" value="ECF_ATPase_2"/>
    <property type="match status" value="1"/>
</dbReference>
<dbReference type="NCBIfam" id="NF010153">
    <property type="entry name" value="PRK13631.1"/>
    <property type="match status" value="1"/>
</dbReference>
<dbReference type="PANTHER" id="PTHR43553:SF27">
    <property type="entry name" value="ENERGY-COUPLING FACTOR TRANSPORTER ATP-BINDING PROTEIN ECFA2"/>
    <property type="match status" value="1"/>
</dbReference>
<dbReference type="PANTHER" id="PTHR43553">
    <property type="entry name" value="HEAVY METAL TRANSPORTER"/>
    <property type="match status" value="1"/>
</dbReference>
<dbReference type="Pfam" id="PF00005">
    <property type="entry name" value="ABC_tran"/>
    <property type="match status" value="1"/>
</dbReference>
<dbReference type="SMART" id="SM00382">
    <property type="entry name" value="AAA"/>
    <property type="match status" value="1"/>
</dbReference>
<dbReference type="SUPFAM" id="SSF52540">
    <property type="entry name" value="P-loop containing nucleoside triphosphate hydrolases"/>
    <property type="match status" value="1"/>
</dbReference>
<dbReference type="PROSITE" id="PS00211">
    <property type="entry name" value="ABC_TRANSPORTER_1"/>
    <property type="match status" value="1"/>
</dbReference>
<dbReference type="PROSITE" id="PS50893">
    <property type="entry name" value="ABC_TRANSPORTER_2"/>
    <property type="match status" value="1"/>
</dbReference>
<dbReference type="PROSITE" id="PS51246">
    <property type="entry name" value="CBIO"/>
    <property type="match status" value="1"/>
</dbReference>
<proteinExistence type="inferred from homology"/>
<evidence type="ECO:0000255" key="1">
    <source>
        <dbReference type="HAMAP-Rule" id="MF_01710"/>
    </source>
</evidence>
<evidence type="ECO:0000305" key="2"/>
<protein>
    <recommendedName>
        <fullName evidence="1">Energy-coupling factor transporter ATP-binding protein EcfA2</fullName>
        <shortName evidence="1">ECF transporter A component EcfA2</shortName>
        <ecNumber evidence="1">7.-.-.-</ecNumber>
    </recommendedName>
</protein>
<organism>
    <name type="scientific">Mycoplasma genitalium (strain ATCC 33530 / DSM 19775 / NCTC 10195 / G37)</name>
    <name type="common">Mycoplasmoides genitalium</name>
    <dbReference type="NCBI Taxonomy" id="243273"/>
    <lineage>
        <taxon>Bacteria</taxon>
        <taxon>Bacillati</taxon>
        <taxon>Mycoplasmatota</taxon>
        <taxon>Mycoplasmoidales</taxon>
        <taxon>Mycoplasmoidaceae</taxon>
        <taxon>Mycoplasmoides</taxon>
    </lineage>
</organism>
<keyword id="KW-0067">ATP-binding</keyword>
<keyword id="KW-1003">Cell membrane</keyword>
<keyword id="KW-0472">Membrane</keyword>
<keyword id="KW-0547">Nucleotide-binding</keyword>
<keyword id="KW-1185">Reference proteome</keyword>
<keyword id="KW-1278">Translocase</keyword>
<keyword id="KW-0813">Transport</keyword>
<accession>P47426</accession>
<accession>Q49207</accession>
<feature type="chain" id="PRO_0000092037" description="Energy-coupling factor transporter ATP-binding protein EcfA2">
    <location>
        <begin position="1"/>
        <end position="304"/>
    </location>
</feature>
<feature type="domain" description="ABC transporter" evidence="1">
    <location>
        <begin position="11"/>
        <end position="260"/>
    </location>
</feature>
<feature type="binding site" evidence="1">
    <location>
        <begin position="54"/>
        <end position="61"/>
    </location>
    <ligand>
        <name>ATP</name>
        <dbReference type="ChEBI" id="CHEBI:30616"/>
    </ligand>
</feature>
<feature type="sequence conflict" description="In Ref. 2; AAD10568." evidence="2" ref="2">
    <original>LKAD</original>
    <variation>FKSS</variation>
    <location>
        <begin position="11"/>
        <end position="14"/>
    </location>
</feature>
<reference key="1">
    <citation type="journal article" date="1995" name="Science">
        <title>The minimal gene complement of Mycoplasma genitalium.</title>
        <authorList>
            <person name="Fraser C.M."/>
            <person name="Gocayne J.D."/>
            <person name="White O."/>
            <person name="Adams M.D."/>
            <person name="Clayton R.A."/>
            <person name="Fleischmann R.D."/>
            <person name="Bult C.J."/>
            <person name="Kerlavage A.R."/>
            <person name="Sutton G.G."/>
            <person name="Kelley J.M."/>
            <person name="Fritchman J.L."/>
            <person name="Weidman J.F."/>
            <person name="Small K.V."/>
            <person name="Sandusky M."/>
            <person name="Fuhrmann J.L."/>
            <person name="Nguyen D.T."/>
            <person name="Utterback T.R."/>
            <person name="Saudek D.M."/>
            <person name="Phillips C.A."/>
            <person name="Merrick J.M."/>
            <person name="Tomb J.-F."/>
            <person name="Dougherty B.A."/>
            <person name="Bott K.F."/>
            <person name="Hu P.-C."/>
            <person name="Lucier T.S."/>
            <person name="Peterson S.N."/>
            <person name="Smith H.O."/>
            <person name="Hutchison C.A. III"/>
            <person name="Venter J.C."/>
        </authorList>
    </citation>
    <scope>NUCLEOTIDE SEQUENCE [LARGE SCALE GENOMIC DNA]</scope>
    <source>
        <strain>ATCC 33530 / DSM 19775 / NCTC 10195 / G37</strain>
    </source>
</reference>
<reference key="2">
    <citation type="journal article" date="1993" name="J. Bacteriol.">
        <title>A survey of the Mycoplasma genitalium genome by using random sequencing.</title>
        <authorList>
            <person name="Peterson S.N."/>
            <person name="Hu P.-C."/>
            <person name="Bott K.F."/>
            <person name="Hutchison C.A. III"/>
        </authorList>
    </citation>
    <scope>NUCLEOTIDE SEQUENCE [GENOMIC DNA] OF 10-83 AND 262-304</scope>
    <source>
        <strain>ATCC 33530 / DSM 19775 / NCTC 10195 / G37</strain>
    </source>
</reference>
<sequence>MKKKIVPINPLKADEILAVSHLSCVFNSKTNNPIKVIDDFSYTFQKNQIYCIIGDSGSGKSTLVNHFNGLIKPNQGDIWVKDIYIGAKQRKIKNFKKLRKTISIVFQFPEYQLFKDTVEKDIMFGPVALGQSKYDARQKAAYYLEMMGLKYPFLERNPFELSGGQKRRVAIAGILAIEPEILIFDEPTAGLDPEGEREMMQLIKTAKQQQRTVFMITHQMENVLEVADVVLVLAKGKLVKAASPYEVFMDQTFLEKTTIVLPPVIQVIKDLIAINAHFNKLIELQPKNLEQLASAINKTIANHG</sequence>